<reference evidence="3" key="1">
    <citation type="journal article" date="2006" name="Peptides">
        <title>Bradykinin-related peptides from Phyllomedusa hypochondrialis.</title>
        <authorList>
            <person name="Brand G.D."/>
            <person name="Krause F.C."/>
            <person name="Silva L.P."/>
            <person name="Leite J.R.S.A."/>
            <person name="Melo J.A.T."/>
            <person name="Prates M.V."/>
            <person name="Pesquero J.B."/>
            <person name="Santos E.L."/>
            <person name="Nakaie C.R."/>
            <person name="Costa-Neto C.M."/>
            <person name="Bloch C. Jr."/>
        </authorList>
    </citation>
    <scope>PROTEIN SEQUENCE</scope>
    <scope>MASS SPECTROMETRY</scope>
    <source>
        <tissue evidence="2">Skin secretion</tissue>
    </source>
</reference>
<dbReference type="GO" id="GO:0005576">
    <property type="term" value="C:extracellular region"/>
    <property type="evidence" value="ECO:0007669"/>
    <property type="project" value="UniProtKB-SubCell"/>
</dbReference>
<dbReference type="GO" id="GO:0090729">
    <property type="term" value="F:toxin activity"/>
    <property type="evidence" value="ECO:0007669"/>
    <property type="project" value="UniProtKB-KW"/>
</dbReference>
<dbReference type="GO" id="GO:0006952">
    <property type="term" value="P:defense response"/>
    <property type="evidence" value="ECO:0007669"/>
    <property type="project" value="UniProtKB-KW"/>
</dbReference>
<dbReference type="GO" id="GO:0042311">
    <property type="term" value="P:vasodilation"/>
    <property type="evidence" value="ECO:0007669"/>
    <property type="project" value="UniProtKB-KW"/>
</dbReference>
<comment type="function">
    <text evidence="1">Produces in vitro relaxation of rat arterial smooth muscle and constriction of intestinal smooth muscle (By similarity). May target bradykinin receptors (BDKRB).</text>
</comment>
<comment type="subcellular location">
    <subcellularLocation>
        <location>Secreted</location>
    </subcellularLocation>
</comment>
<comment type="tissue specificity">
    <text evidence="2">Expressed by the skin glands.</text>
</comment>
<comment type="mass spectrometry"/>
<comment type="similarity">
    <text evidence="3">Belongs to the bradykinin-related peptide family.</text>
</comment>
<protein>
    <recommendedName>
        <fullName>Des-Arg9-[Thr6]-bradykinin</fullName>
        <shortName>Des-Arg-[Thr6]-bradykinin</shortName>
    </recommendedName>
</protein>
<organism>
    <name type="scientific">Pithecopus hypochondrialis</name>
    <name type="common">Orange-legged leaf frog</name>
    <name type="synonym">Phyllomedusa hypochondrialis</name>
    <dbReference type="NCBI Taxonomy" id="317381"/>
    <lineage>
        <taxon>Eukaryota</taxon>
        <taxon>Metazoa</taxon>
        <taxon>Chordata</taxon>
        <taxon>Craniata</taxon>
        <taxon>Vertebrata</taxon>
        <taxon>Euteleostomi</taxon>
        <taxon>Amphibia</taxon>
        <taxon>Batrachia</taxon>
        <taxon>Anura</taxon>
        <taxon>Neobatrachia</taxon>
        <taxon>Hyloidea</taxon>
        <taxon>Hylidae</taxon>
        <taxon>Phyllomedusinae</taxon>
        <taxon>Pithecopus</taxon>
    </lineage>
</organism>
<name>BRK3_PITHY</name>
<accession>P84893</accession>
<keyword id="KW-0878">Amphibian defense peptide</keyword>
<keyword id="KW-0903">Direct protein sequencing</keyword>
<keyword id="KW-1213">G-protein coupled receptor impairing toxin</keyword>
<keyword id="KW-0964">Secreted</keyword>
<keyword id="KW-0800">Toxin</keyword>
<keyword id="KW-0838">Vasoactive</keyword>
<keyword id="KW-0840">Vasodilator</keyword>
<proteinExistence type="evidence at protein level"/>
<evidence type="ECO:0000250" key="1"/>
<evidence type="ECO:0000269" key="2">
    <source>
    </source>
</evidence>
<evidence type="ECO:0000305" key="3"/>
<feature type="peptide" id="PRO_0000248464" description="Des-Arg9-[Thr6]-bradykinin" evidence="2">
    <location>
        <begin position="1"/>
        <end position="8"/>
    </location>
</feature>
<sequence>RPPGFTPF</sequence>